<geneLocation type="chloroplast"/>
<evidence type="ECO:0000255" key="1">
    <source>
        <dbReference type="HAMAP-Rule" id="MF_00432"/>
    </source>
</evidence>
<comment type="function">
    <text evidence="1">Component of the cytochrome b6-f complex, which mediates electron transfer between photosystem II (PSII) and photosystem I (PSI), cyclic electron flow around PSI, and state transitions. PetG is required for either the stability or assembly of the cytochrome b6-f complex.</text>
</comment>
<comment type="subunit">
    <text evidence="1">The 4 large subunits of the cytochrome b6-f complex are cytochrome b6, subunit IV (17 kDa polypeptide, PetD), cytochrome f and the Rieske protein, while the 4 small subunits are PetG, PetL, PetM and PetN. The complex functions as a dimer.</text>
</comment>
<comment type="subcellular location">
    <subcellularLocation>
        <location evidence="1">Plastid</location>
        <location evidence="1">Chloroplast thylakoid membrane</location>
        <topology evidence="1">Single-pass membrane protein</topology>
    </subcellularLocation>
</comment>
<comment type="similarity">
    <text evidence="1">Belongs to the PetG family.</text>
</comment>
<proteinExistence type="inferred from homology"/>
<accession>Q0ZJ01</accession>
<protein>
    <recommendedName>
        <fullName evidence="1">Cytochrome b6-f complex subunit 5</fullName>
    </recommendedName>
    <alternativeName>
        <fullName evidence="1">Cytochrome b6-f complex subunit PetG</fullName>
    </alternativeName>
    <alternativeName>
        <fullName evidence="1">Cytochrome b6-f complex subunit V</fullName>
    </alternativeName>
</protein>
<feature type="chain" id="PRO_0000275513" description="Cytochrome b6-f complex subunit 5">
    <location>
        <begin position="1"/>
        <end position="37"/>
    </location>
</feature>
<feature type="transmembrane region" description="Helical" evidence="1">
    <location>
        <begin position="5"/>
        <end position="25"/>
    </location>
</feature>
<sequence length="37" mass="4170">MIEVFLFGIVLGLIPITLAGLFVTAYLQYRRGDQLDL</sequence>
<dbReference type="EMBL" id="DQ424856">
    <property type="protein sequence ID" value="ABE47553.1"/>
    <property type="molecule type" value="Genomic_DNA"/>
</dbReference>
<dbReference type="RefSeq" id="YP_002608390.1">
    <property type="nucleotide sequence ID" value="NC_012119.1"/>
</dbReference>
<dbReference type="RefSeq" id="YP_567095.1">
    <property type="nucleotide sequence ID" value="NC_007957.1"/>
</dbReference>
<dbReference type="SMR" id="Q0ZJ01"/>
<dbReference type="FunCoup" id="Q0ZJ01">
    <property type="interactions" value="39"/>
</dbReference>
<dbReference type="STRING" id="29760.Q0ZJ01"/>
<dbReference type="GeneID" id="4025056"/>
<dbReference type="GeneID" id="7498664"/>
<dbReference type="KEGG" id="vvi:4025056"/>
<dbReference type="KEGG" id="vvi:7498664"/>
<dbReference type="InParanoid" id="Q0ZJ01"/>
<dbReference type="OrthoDB" id="11092at71240"/>
<dbReference type="Proteomes" id="UP000009183">
    <property type="component" value="Chloroplast"/>
</dbReference>
<dbReference type="GO" id="GO:0009535">
    <property type="term" value="C:chloroplast thylakoid membrane"/>
    <property type="evidence" value="ECO:0007669"/>
    <property type="project" value="UniProtKB-SubCell"/>
</dbReference>
<dbReference type="GO" id="GO:0009512">
    <property type="term" value="C:cytochrome b6f complex"/>
    <property type="evidence" value="ECO:0007669"/>
    <property type="project" value="InterPro"/>
</dbReference>
<dbReference type="GO" id="GO:0045158">
    <property type="term" value="F:electron transporter, transferring electrons within cytochrome b6/f complex of photosystem II activity"/>
    <property type="evidence" value="ECO:0007669"/>
    <property type="project" value="UniProtKB-UniRule"/>
</dbReference>
<dbReference type="GO" id="GO:0017004">
    <property type="term" value="P:cytochrome complex assembly"/>
    <property type="evidence" value="ECO:0007669"/>
    <property type="project" value="UniProtKB-UniRule"/>
</dbReference>
<dbReference type="GO" id="GO:0015979">
    <property type="term" value="P:photosynthesis"/>
    <property type="evidence" value="ECO:0007669"/>
    <property type="project" value="UniProtKB-KW"/>
</dbReference>
<dbReference type="HAMAP" id="MF_00432">
    <property type="entry name" value="Cytb6_f_PetG"/>
    <property type="match status" value="1"/>
</dbReference>
<dbReference type="InterPro" id="IPR003683">
    <property type="entry name" value="Cyt_6/f_cplx_su5"/>
</dbReference>
<dbReference type="InterPro" id="IPR036099">
    <property type="entry name" value="Cyt_6/f_cplx_su5_sf"/>
</dbReference>
<dbReference type="NCBIfam" id="NF001907">
    <property type="entry name" value="PRK00665.1"/>
    <property type="match status" value="1"/>
</dbReference>
<dbReference type="Pfam" id="PF02529">
    <property type="entry name" value="PetG"/>
    <property type="match status" value="1"/>
</dbReference>
<dbReference type="PIRSF" id="PIRSF000034">
    <property type="entry name" value="Cyt_b6-f_V"/>
    <property type="match status" value="1"/>
</dbReference>
<dbReference type="SUPFAM" id="SSF103446">
    <property type="entry name" value="PetG subunit of the cytochrome b6f complex"/>
    <property type="match status" value="1"/>
</dbReference>
<gene>
    <name evidence="1" type="primary">petG</name>
</gene>
<keyword id="KW-0150">Chloroplast</keyword>
<keyword id="KW-0249">Electron transport</keyword>
<keyword id="KW-0472">Membrane</keyword>
<keyword id="KW-0602">Photosynthesis</keyword>
<keyword id="KW-0934">Plastid</keyword>
<keyword id="KW-1185">Reference proteome</keyword>
<keyword id="KW-0793">Thylakoid</keyword>
<keyword id="KW-0812">Transmembrane</keyword>
<keyword id="KW-1133">Transmembrane helix</keyword>
<keyword id="KW-0813">Transport</keyword>
<organism>
    <name type="scientific">Vitis vinifera</name>
    <name type="common">Grape</name>
    <dbReference type="NCBI Taxonomy" id="29760"/>
    <lineage>
        <taxon>Eukaryota</taxon>
        <taxon>Viridiplantae</taxon>
        <taxon>Streptophyta</taxon>
        <taxon>Embryophyta</taxon>
        <taxon>Tracheophyta</taxon>
        <taxon>Spermatophyta</taxon>
        <taxon>Magnoliopsida</taxon>
        <taxon>eudicotyledons</taxon>
        <taxon>Gunneridae</taxon>
        <taxon>Pentapetalae</taxon>
        <taxon>rosids</taxon>
        <taxon>Vitales</taxon>
        <taxon>Vitaceae</taxon>
        <taxon>Viteae</taxon>
        <taxon>Vitis</taxon>
    </lineage>
</organism>
<reference key="1">
    <citation type="journal article" date="2006" name="BMC Evol. Biol.">
        <title>Phylogenetic analyses of Vitis (Vitaceae) based on complete chloroplast genome sequences: effects of taxon sampling and phylogenetic methods on resolving relationships among rosids.</title>
        <authorList>
            <person name="Jansen R.K."/>
            <person name="Kaittanis C."/>
            <person name="Lee S.-B."/>
            <person name="Saski C."/>
            <person name="Tomkins J."/>
            <person name="Alverson A.J."/>
            <person name="Daniell H."/>
        </authorList>
    </citation>
    <scope>NUCLEOTIDE SEQUENCE [LARGE SCALE GENOMIC DNA]</scope>
    <source>
        <strain>cv. Maxxa</strain>
    </source>
</reference>
<name>PETG_VITVI</name>